<comment type="function">
    <text evidence="1">Directs the termination of nascent peptide synthesis (translation) in response to the termination codons UAA, UAG and UGA.</text>
</comment>
<comment type="subunit">
    <text evidence="1">Heterodimer of two subunits, one of which binds GTP.</text>
</comment>
<comment type="subcellular location">
    <subcellularLocation>
        <location evidence="2">Cytoplasm</location>
    </subcellularLocation>
</comment>
<comment type="similarity">
    <text evidence="2">Belongs to the eukaryotic release factor 1 family.</text>
</comment>
<dbReference type="EMBL" id="AE009441">
    <property type="protein sequence ID" value="AAL64527.1"/>
    <property type="molecule type" value="Genomic_DNA"/>
</dbReference>
<dbReference type="RefSeq" id="WP_011008995.1">
    <property type="nucleotide sequence ID" value="NC_003364.1"/>
</dbReference>
<dbReference type="SMR" id="Q8ZU81"/>
<dbReference type="FunCoup" id="Q8ZU81">
    <property type="interactions" value="278"/>
</dbReference>
<dbReference type="STRING" id="178306.PAE2906"/>
<dbReference type="EnsemblBacteria" id="AAL64527">
    <property type="protein sequence ID" value="AAL64527"/>
    <property type="gene ID" value="PAE2906"/>
</dbReference>
<dbReference type="GeneID" id="1463689"/>
<dbReference type="KEGG" id="pai:PAE2906"/>
<dbReference type="PATRIC" id="fig|178306.9.peg.2173"/>
<dbReference type="eggNOG" id="arCOG01742">
    <property type="taxonomic scope" value="Archaea"/>
</dbReference>
<dbReference type="HOGENOM" id="CLU_035759_3_0_2"/>
<dbReference type="InParanoid" id="Q8ZU81"/>
<dbReference type="Proteomes" id="UP000002439">
    <property type="component" value="Chromosome"/>
</dbReference>
<dbReference type="GO" id="GO:0005829">
    <property type="term" value="C:cytosol"/>
    <property type="evidence" value="ECO:0000318"/>
    <property type="project" value="GO_Central"/>
</dbReference>
<dbReference type="GO" id="GO:0018444">
    <property type="term" value="C:translation release factor complex"/>
    <property type="evidence" value="ECO:0000318"/>
    <property type="project" value="GO_Central"/>
</dbReference>
<dbReference type="GO" id="GO:1990825">
    <property type="term" value="F:sequence-specific mRNA binding"/>
    <property type="evidence" value="ECO:0000318"/>
    <property type="project" value="GO_Central"/>
</dbReference>
<dbReference type="GO" id="GO:0016149">
    <property type="term" value="F:translation release factor activity, codon specific"/>
    <property type="evidence" value="ECO:0000318"/>
    <property type="project" value="GO_Central"/>
</dbReference>
<dbReference type="FunFam" id="3.30.420.60:FF:000003">
    <property type="entry name" value="Peptide chain release factor subunit 1"/>
    <property type="match status" value="1"/>
</dbReference>
<dbReference type="FunFam" id="3.30.960.10:FF:000003">
    <property type="entry name" value="Peptide chain release factor subunit 1"/>
    <property type="match status" value="1"/>
</dbReference>
<dbReference type="Gene3D" id="3.30.1330.30">
    <property type="match status" value="1"/>
</dbReference>
<dbReference type="Gene3D" id="3.30.960.10">
    <property type="entry name" value="eRF1 domain 1"/>
    <property type="match status" value="1"/>
</dbReference>
<dbReference type="Gene3D" id="3.30.420.60">
    <property type="entry name" value="eRF1 domain 2"/>
    <property type="match status" value="1"/>
</dbReference>
<dbReference type="HAMAP" id="MF_00424">
    <property type="entry name" value="Rel_fact_arch_1"/>
    <property type="match status" value="1"/>
</dbReference>
<dbReference type="InterPro" id="IPR042226">
    <property type="entry name" value="eFR1_2_sf"/>
</dbReference>
<dbReference type="InterPro" id="IPR005140">
    <property type="entry name" value="eRF1_1_Pelota"/>
</dbReference>
<dbReference type="InterPro" id="IPR024049">
    <property type="entry name" value="eRF1_1_sf"/>
</dbReference>
<dbReference type="InterPro" id="IPR005141">
    <property type="entry name" value="eRF1_2"/>
</dbReference>
<dbReference type="InterPro" id="IPR005142">
    <property type="entry name" value="eRF1_3"/>
</dbReference>
<dbReference type="InterPro" id="IPR020918">
    <property type="entry name" value="Peptide_chain-rel_aRF1"/>
</dbReference>
<dbReference type="InterPro" id="IPR004403">
    <property type="entry name" value="Peptide_chain-rel_eRF1/aRF1"/>
</dbReference>
<dbReference type="InterPro" id="IPR029064">
    <property type="entry name" value="Ribosomal_eL30-like_sf"/>
</dbReference>
<dbReference type="NCBIfam" id="TIGR03676">
    <property type="entry name" value="aRF1_eRF1"/>
    <property type="match status" value="1"/>
</dbReference>
<dbReference type="PANTHER" id="PTHR10113">
    <property type="entry name" value="PEPTIDE CHAIN RELEASE FACTOR SUBUNIT 1"/>
    <property type="match status" value="1"/>
</dbReference>
<dbReference type="Pfam" id="PF03463">
    <property type="entry name" value="eRF1_1"/>
    <property type="match status" value="1"/>
</dbReference>
<dbReference type="Pfam" id="PF03464">
    <property type="entry name" value="eRF1_2"/>
    <property type="match status" value="1"/>
</dbReference>
<dbReference type="Pfam" id="PF03465">
    <property type="entry name" value="eRF1_3"/>
    <property type="match status" value="1"/>
</dbReference>
<dbReference type="SMART" id="SM01194">
    <property type="entry name" value="eRF1_1"/>
    <property type="match status" value="1"/>
</dbReference>
<dbReference type="SUPFAM" id="SSF55315">
    <property type="entry name" value="L30e-like"/>
    <property type="match status" value="1"/>
</dbReference>
<dbReference type="SUPFAM" id="SSF55481">
    <property type="entry name" value="N-terminal domain of eukaryotic peptide chain release factor subunit 1, ERF1"/>
    <property type="match status" value="1"/>
</dbReference>
<dbReference type="SUPFAM" id="SSF53137">
    <property type="entry name" value="Translational machinery components"/>
    <property type="match status" value="1"/>
</dbReference>
<evidence type="ECO:0000250" key="1"/>
<evidence type="ECO:0000305" key="2"/>
<sequence>MSFNRPPNGVYYIRSAVELRAFVNLLKKFKGYATTLITLYINAERPIPDVVNLLRSEWSTAANIKDKTTRTHVQDTLERIINNLKGEAKAPENGMAVFAGFHMINQGNYEWVYYVVIPPQPINTFKYICDTAFHTELLEDQLHAGVVYGIVVIERGEAVIALLKGGQWEVVKSVEFFVPGKHHAGGQSANRFKRQTEHLAEAFYKMVAEEANKIFLQIPTLKGIIVAGPGPTKEDFLEEGGLDYRLKDKILAIVPACCANEYGVMEAIRNAQEQLKESEYVKAKEVMDKVMYYAVKKSEYLVYGRERALKALEMGIADIIVIAEELGEDAVLEVIMKAEEKGIKVEVVPRGVEESKTLMQAFGGYVALLSTPVWVLEQQLSIAEAAQR</sequence>
<organism>
    <name type="scientific">Pyrobaculum aerophilum (strain ATCC 51768 / DSM 7523 / JCM 9630 / CIP 104966 / NBRC 100827 / IM2)</name>
    <dbReference type="NCBI Taxonomy" id="178306"/>
    <lineage>
        <taxon>Archaea</taxon>
        <taxon>Thermoproteota</taxon>
        <taxon>Thermoprotei</taxon>
        <taxon>Thermoproteales</taxon>
        <taxon>Thermoproteaceae</taxon>
        <taxon>Pyrobaculum</taxon>
    </lineage>
</organism>
<protein>
    <recommendedName>
        <fullName>Peptide chain release factor subunit 1</fullName>
    </recommendedName>
    <alternativeName>
        <fullName>Translation termination factor aRF1</fullName>
    </alternativeName>
</protein>
<accession>Q8ZU81</accession>
<feature type="chain" id="PRO_0000143181" description="Peptide chain release factor subunit 1">
    <location>
        <begin position="1"/>
        <end position="388"/>
    </location>
</feature>
<gene>
    <name type="primary">prf1</name>
    <name type="ordered locus">PAE2906</name>
</gene>
<keyword id="KW-0963">Cytoplasm</keyword>
<keyword id="KW-0648">Protein biosynthesis</keyword>
<keyword id="KW-1185">Reference proteome</keyword>
<name>RF1_PYRAE</name>
<proteinExistence type="inferred from homology"/>
<reference key="1">
    <citation type="journal article" date="2002" name="Proc. Natl. Acad. Sci. U.S.A.">
        <title>Genome sequence of the hyperthermophilic crenarchaeon Pyrobaculum aerophilum.</title>
        <authorList>
            <person name="Fitz-Gibbon S.T."/>
            <person name="Ladner H."/>
            <person name="Kim U.-J."/>
            <person name="Stetter K.O."/>
            <person name="Simon M.I."/>
            <person name="Miller J.H."/>
        </authorList>
    </citation>
    <scope>NUCLEOTIDE SEQUENCE [LARGE SCALE GENOMIC DNA]</scope>
    <source>
        <strain>ATCC 51768 / DSM 7523 / JCM 9630 / CIP 104966 / NBRC 100827 / IM2</strain>
    </source>
</reference>